<evidence type="ECO:0000255" key="1">
    <source>
        <dbReference type="HAMAP-Rule" id="MF_00260"/>
    </source>
</evidence>
<feature type="chain" id="PRO_0000142908" description="Porphobilinogen deaminase">
    <location>
        <begin position="1"/>
        <end position="309"/>
    </location>
</feature>
<feature type="modified residue" description="S-(dipyrrolylmethanemethyl)cysteine" evidence="1">
    <location>
        <position position="241"/>
    </location>
</feature>
<name>HEM3_BACHK</name>
<protein>
    <recommendedName>
        <fullName evidence="1">Porphobilinogen deaminase</fullName>
        <shortName evidence="1">PBG</shortName>
        <ecNumber evidence="1">2.5.1.61</ecNumber>
    </recommendedName>
    <alternativeName>
        <fullName evidence="1">Hydroxymethylbilane synthase</fullName>
        <shortName evidence="1">HMBS</shortName>
    </alternativeName>
    <alternativeName>
        <fullName evidence="1">Pre-uroporphyrinogen synthase</fullName>
    </alternativeName>
</protein>
<comment type="function">
    <text evidence="1">Tetrapolymerization of the monopyrrole PBG into the hydroxymethylbilane pre-uroporphyrinogen in several discrete steps.</text>
</comment>
<comment type="catalytic activity">
    <reaction evidence="1">
        <text>4 porphobilinogen + H2O = hydroxymethylbilane + 4 NH4(+)</text>
        <dbReference type="Rhea" id="RHEA:13185"/>
        <dbReference type="ChEBI" id="CHEBI:15377"/>
        <dbReference type="ChEBI" id="CHEBI:28938"/>
        <dbReference type="ChEBI" id="CHEBI:57845"/>
        <dbReference type="ChEBI" id="CHEBI:58126"/>
        <dbReference type="EC" id="2.5.1.61"/>
    </reaction>
</comment>
<comment type="cofactor">
    <cofactor evidence="1">
        <name>dipyrromethane</name>
        <dbReference type="ChEBI" id="CHEBI:60342"/>
    </cofactor>
    <text evidence="1">Binds 1 dipyrromethane group covalently.</text>
</comment>
<comment type="pathway">
    <text evidence="1">Porphyrin-containing compound metabolism; protoporphyrin-IX biosynthesis; coproporphyrinogen-III from 5-aminolevulinate: step 2/4.</text>
</comment>
<comment type="subunit">
    <text evidence="1">Monomer.</text>
</comment>
<comment type="miscellaneous">
    <text evidence="1">The porphobilinogen subunits are added to the dipyrromethane group.</text>
</comment>
<comment type="similarity">
    <text evidence="1">Belongs to the HMBS family.</text>
</comment>
<accession>Q6HD62</accession>
<reference key="1">
    <citation type="journal article" date="2006" name="J. Bacteriol.">
        <title>Pathogenomic sequence analysis of Bacillus cereus and Bacillus thuringiensis isolates closely related to Bacillus anthracis.</title>
        <authorList>
            <person name="Han C.S."/>
            <person name="Xie G."/>
            <person name="Challacombe J.F."/>
            <person name="Altherr M.R."/>
            <person name="Bhotika S.S."/>
            <person name="Bruce D."/>
            <person name="Campbell C.S."/>
            <person name="Campbell M.L."/>
            <person name="Chen J."/>
            <person name="Chertkov O."/>
            <person name="Cleland C."/>
            <person name="Dimitrijevic M."/>
            <person name="Doggett N.A."/>
            <person name="Fawcett J.J."/>
            <person name="Glavina T."/>
            <person name="Goodwin L.A."/>
            <person name="Hill K.K."/>
            <person name="Hitchcock P."/>
            <person name="Jackson P.J."/>
            <person name="Keim P."/>
            <person name="Kewalramani A.R."/>
            <person name="Longmire J."/>
            <person name="Lucas S."/>
            <person name="Malfatti S."/>
            <person name="McMurry K."/>
            <person name="Meincke L.J."/>
            <person name="Misra M."/>
            <person name="Moseman B.L."/>
            <person name="Mundt M."/>
            <person name="Munk A.C."/>
            <person name="Okinaka R.T."/>
            <person name="Parson-Quintana B."/>
            <person name="Reilly L.P."/>
            <person name="Richardson P."/>
            <person name="Robinson D.L."/>
            <person name="Rubin E."/>
            <person name="Saunders E."/>
            <person name="Tapia R."/>
            <person name="Tesmer J.G."/>
            <person name="Thayer N."/>
            <person name="Thompson L.S."/>
            <person name="Tice H."/>
            <person name="Ticknor L.O."/>
            <person name="Wills P.L."/>
            <person name="Brettin T.S."/>
            <person name="Gilna P."/>
        </authorList>
    </citation>
    <scope>NUCLEOTIDE SEQUENCE [LARGE SCALE GENOMIC DNA]</scope>
    <source>
        <strain>97-27</strain>
    </source>
</reference>
<organism>
    <name type="scientific">Bacillus thuringiensis subsp. konkukian (strain 97-27)</name>
    <dbReference type="NCBI Taxonomy" id="281309"/>
    <lineage>
        <taxon>Bacteria</taxon>
        <taxon>Bacillati</taxon>
        <taxon>Bacillota</taxon>
        <taxon>Bacilli</taxon>
        <taxon>Bacillales</taxon>
        <taxon>Bacillaceae</taxon>
        <taxon>Bacillus</taxon>
        <taxon>Bacillus cereus group</taxon>
    </lineage>
</organism>
<keyword id="KW-0627">Porphyrin biosynthesis</keyword>
<keyword id="KW-0808">Transferase</keyword>
<dbReference type="EC" id="2.5.1.61" evidence="1"/>
<dbReference type="EMBL" id="AE017355">
    <property type="protein sequence ID" value="AAT60848.1"/>
    <property type="molecule type" value="Genomic_DNA"/>
</dbReference>
<dbReference type="RefSeq" id="WP_001226416.1">
    <property type="nucleotide sequence ID" value="NC_005957.1"/>
</dbReference>
<dbReference type="RefSeq" id="YP_038514.1">
    <property type="nucleotide sequence ID" value="NC_005957.1"/>
</dbReference>
<dbReference type="SMR" id="Q6HD62"/>
<dbReference type="KEGG" id="btk:BT9727_4197"/>
<dbReference type="PATRIC" id="fig|281309.8.peg.4475"/>
<dbReference type="HOGENOM" id="CLU_019704_0_2_9"/>
<dbReference type="UniPathway" id="UPA00251">
    <property type="reaction ID" value="UER00319"/>
</dbReference>
<dbReference type="Proteomes" id="UP000001301">
    <property type="component" value="Chromosome"/>
</dbReference>
<dbReference type="GO" id="GO:0005737">
    <property type="term" value="C:cytoplasm"/>
    <property type="evidence" value="ECO:0007669"/>
    <property type="project" value="TreeGrafter"/>
</dbReference>
<dbReference type="GO" id="GO:0004418">
    <property type="term" value="F:hydroxymethylbilane synthase activity"/>
    <property type="evidence" value="ECO:0007669"/>
    <property type="project" value="UniProtKB-UniRule"/>
</dbReference>
<dbReference type="GO" id="GO:0006782">
    <property type="term" value="P:protoporphyrinogen IX biosynthetic process"/>
    <property type="evidence" value="ECO:0007669"/>
    <property type="project" value="UniProtKB-UniRule"/>
</dbReference>
<dbReference type="CDD" id="cd13646">
    <property type="entry name" value="PBP2_EcHMBS_like"/>
    <property type="match status" value="1"/>
</dbReference>
<dbReference type="FunFam" id="3.30.160.40:FF:000001">
    <property type="entry name" value="Porphobilinogen deaminase"/>
    <property type="match status" value="1"/>
</dbReference>
<dbReference type="FunFam" id="3.40.190.10:FF:000004">
    <property type="entry name" value="Porphobilinogen deaminase"/>
    <property type="match status" value="1"/>
</dbReference>
<dbReference type="FunFam" id="3.40.190.10:FF:000005">
    <property type="entry name" value="Porphobilinogen deaminase"/>
    <property type="match status" value="1"/>
</dbReference>
<dbReference type="Gene3D" id="3.40.190.10">
    <property type="entry name" value="Periplasmic binding protein-like II"/>
    <property type="match status" value="2"/>
</dbReference>
<dbReference type="Gene3D" id="3.30.160.40">
    <property type="entry name" value="Porphobilinogen deaminase, C-terminal domain"/>
    <property type="match status" value="1"/>
</dbReference>
<dbReference type="HAMAP" id="MF_00260">
    <property type="entry name" value="Porphobil_deam"/>
    <property type="match status" value="1"/>
</dbReference>
<dbReference type="InterPro" id="IPR000860">
    <property type="entry name" value="HemC"/>
</dbReference>
<dbReference type="InterPro" id="IPR022419">
    <property type="entry name" value="Porphobilin_deaminase_cofac_BS"/>
</dbReference>
<dbReference type="InterPro" id="IPR022417">
    <property type="entry name" value="Porphobilin_deaminase_N"/>
</dbReference>
<dbReference type="InterPro" id="IPR022418">
    <property type="entry name" value="Porphobilinogen_deaminase_C"/>
</dbReference>
<dbReference type="InterPro" id="IPR036803">
    <property type="entry name" value="Porphobilinogen_deaminase_C_sf"/>
</dbReference>
<dbReference type="NCBIfam" id="TIGR00212">
    <property type="entry name" value="hemC"/>
    <property type="match status" value="1"/>
</dbReference>
<dbReference type="PANTHER" id="PTHR11557">
    <property type="entry name" value="PORPHOBILINOGEN DEAMINASE"/>
    <property type="match status" value="1"/>
</dbReference>
<dbReference type="PANTHER" id="PTHR11557:SF0">
    <property type="entry name" value="PORPHOBILINOGEN DEAMINASE"/>
    <property type="match status" value="1"/>
</dbReference>
<dbReference type="Pfam" id="PF01379">
    <property type="entry name" value="Porphobil_deam"/>
    <property type="match status" value="1"/>
</dbReference>
<dbReference type="Pfam" id="PF03900">
    <property type="entry name" value="Porphobil_deamC"/>
    <property type="match status" value="1"/>
</dbReference>
<dbReference type="PIRSF" id="PIRSF001438">
    <property type="entry name" value="4pyrrol_synth_OHMeBilane_synth"/>
    <property type="match status" value="1"/>
</dbReference>
<dbReference type="PRINTS" id="PR00151">
    <property type="entry name" value="PORPHBDMNASE"/>
</dbReference>
<dbReference type="SUPFAM" id="SSF53850">
    <property type="entry name" value="Periplasmic binding protein-like II"/>
    <property type="match status" value="1"/>
</dbReference>
<dbReference type="SUPFAM" id="SSF54782">
    <property type="entry name" value="Porphobilinogen deaminase (hydroxymethylbilane synthase), C-terminal domain"/>
    <property type="match status" value="1"/>
</dbReference>
<dbReference type="PROSITE" id="PS00533">
    <property type="entry name" value="PORPHOBILINOGEN_DEAM"/>
    <property type="match status" value="1"/>
</dbReference>
<gene>
    <name evidence="1" type="primary">hemC</name>
    <name type="ordered locus">BT9727_4197</name>
</gene>
<proteinExistence type="inferred from homology"/>
<sequence length="309" mass="33690">MRKIIVGSRKSKLALTQTNWFIDQLKALGLPYEFEVKEIVTKGDVILDVTLSKVGGKGLFVKEIEHALLTKEIDMAVHSMKDMPAVLPEGLMIGCTPKRVDPRDAFISKSGASFKELAEGAILGTSSLRRSAQLLAARPDLQVKWIRGNIDTRLRKLKEEDYDAIILATAGLQRMGWDDEVITEHLDETLCVPAVGQGALAIECREDDKDLLQLLAHINDAVTERTVAAERVFLHKLEGGCQVPIAGYATLTENDAIELTALVGSMDGSILLKETVVGTDPEKVGLEAADRLIKQGAKELILAANKGQQ</sequence>